<feature type="chain" id="PRO_1000146294" description="Nucleoside triphosphate pyrophosphatase">
    <location>
        <begin position="1"/>
        <end position="209"/>
    </location>
</feature>
<feature type="active site" description="Proton acceptor" evidence="1">
    <location>
        <position position="79"/>
    </location>
</feature>
<dbReference type="EC" id="3.6.1.9" evidence="1"/>
<dbReference type="EMBL" id="CP000656">
    <property type="protein sequence ID" value="ABP47244.1"/>
    <property type="molecule type" value="Genomic_DNA"/>
</dbReference>
<dbReference type="SMR" id="A4TF31"/>
<dbReference type="STRING" id="350054.Mflv_4776"/>
<dbReference type="KEGG" id="mgi:Mflv_4776"/>
<dbReference type="eggNOG" id="COG0424">
    <property type="taxonomic scope" value="Bacteria"/>
</dbReference>
<dbReference type="HOGENOM" id="CLU_040416_1_2_11"/>
<dbReference type="OrthoDB" id="3527985at2"/>
<dbReference type="GO" id="GO:0005737">
    <property type="term" value="C:cytoplasm"/>
    <property type="evidence" value="ECO:0007669"/>
    <property type="project" value="UniProtKB-SubCell"/>
</dbReference>
<dbReference type="GO" id="GO:0047429">
    <property type="term" value="F:nucleoside triphosphate diphosphatase activity"/>
    <property type="evidence" value="ECO:0007669"/>
    <property type="project" value="UniProtKB-EC"/>
</dbReference>
<dbReference type="GO" id="GO:0009117">
    <property type="term" value="P:nucleotide metabolic process"/>
    <property type="evidence" value="ECO:0007669"/>
    <property type="project" value="UniProtKB-KW"/>
</dbReference>
<dbReference type="CDD" id="cd00555">
    <property type="entry name" value="Maf"/>
    <property type="match status" value="1"/>
</dbReference>
<dbReference type="Gene3D" id="3.90.950.10">
    <property type="match status" value="1"/>
</dbReference>
<dbReference type="HAMAP" id="MF_00528">
    <property type="entry name" value="Maf"/>
    <property type="match status" value="1"/>
</dbReference>
<dbReference type="InterPro" id="IPR029001">
    <property type="entry name" value="ITPase-like_fam"/>
</dbReference>
<dbReference type="InterPro" id="IPR003697">
    <property type="entry name" value="Maf-like"/>
</dbReference>
<dbReference type="NCBIfam" id="TIGR00172">
    <property type="entry name" value="maf"/>
    <property type="match status" value="1"/>
</dbReference>
<dbReference type="PANTHER" id="PTHR43213">
    <property type="entry name" value="BIFUNCTIONAL DTTP/UTP PYROPHOSPHATASE/METHYLTRANSFERASE PROTEIN-RELATED"/>
    <property type="match status" value="1"/>
</dbReference>
<dbReference type="PANTHER" id="PTHR43213:SF5">
    <property type="entry name" value="BIFUNCTIONAL DTTP_UTP PYROPHOSPHATASE_METHYLTRANSFERASE PROTEIN-RELATED"/>
    <property type="match status" value="1"/>
</dbReference>
<dbReference type="Pfam" id="PF02545">
    <property type="entry name" value="Maf"/>
    <property type="match status" value="1"/>
</dbReference>
<dbReference type="PIRSF" id="PIRSF006305">
    <property type="entry name" value="Maf"/>
    <property type="match status" value="1"/>
</dbReference>
<dbReference type="SUPFAM" id="SSF52972">
    <property type="entry name" value="ITPase-like"/>
    <property type="match status" value="1"/>
</dbReference>
<sequence length="209" mass="22021">MTRFVLGSASQGRLGVLRQAGIDPEVVVSDVDEDALLASLDPELPPEAVVAKLANAKALSVAAALPQELLADCVVLGCDSMLYLDGRLSGKPGTPEAARRQWEQMAGTTGHLLTGHALLRLRDGVITHTEGDTGSTAVHFGRPSEAELTRYVDSGEPIHVAGAFTLDGLGGWFIDGIDGDPSNVIGVSLPLVQRLISRTGLSISEFWTR</sequence>
<organism>
    <name type="scientific">Mycolicibacterium gilvum (strain PYR-GCK)</name>
    <name type="common">Mycobacterium gilvum (strain PYR-GCK)</name>
    <dbReference type="NCBI Taxonomy" id="350054"/>
    <lineage>
        <taxon>Bacteria</taxon>
        <taxon>Bacillati</taxon>
        <taxon>Actinomycetota</taxon>
        <taxon>Actinomycetes</taxon>
        <taxon>Mycobacteriales</taxon>
        <taxon>Mycobacteriaceae</taxon>
        <taxon>Mycolicibacterium</taxon>
    </lineage>
</organism>
<accession>A4TF31</accession>
<evidence type="ECO:0000255" key="1">
    <source>
        <dbReference type="HAMAP-Rule" id="MF_00528"/>
    </source>
</evidence>
<proteinExistence type="inferred from homology"/>
<name>NTPP_MYCGI</name>
<comment type="function">
    <text evidence="1">Nucleoside triphosphate pyrophosphatase. May have a dual role in cell division arrest and in preventing the incorporation of modified nucleotides into cellular nucleic acids.</text>
</comment>
<comment type="catalytic activity">
    <reaction evidence="1">
        <text>a ribonucleoside 5'-triphosphate + H2O = a ribonucleoside 5'-phosphate + diphosphate + H(+)</text>
        <dbReference type="Rhea" id="RHEA:23996"/>
        <dbReference type="ChEBI" id="CHEBI:15377"/>
        <dbReference type="ChEBI" id="CHEBI:15378"/>
        <dbReference type="ChEBI" id="CHEBI:33019"/>
        <dbReference type="ChEBI" id="CHEBI:58043"/>
        <dbReference type="ChEBI" id="CHEBI:61557"/>
        <dbReference type="EC" id="3.6.1.9"/>
    </reaction>
</comment>
<comment type="catalytic activity">
    <reaction evidence="1">
        <text>a 2'-deoxyribonucleoside 5'-triphosphate + H2O = a 2'-deoxyribonucleoside 5'-phosphate + diphosphate + H(+)</text>
        <dbReference type="Rhea" id="RHEA:44644"/>
        <dbReference type="ChEBI" id="CHEBI:15377"/>
        <dbReference type="ChEBI" id="CHEBI:15378"/>
        <dbReference type="ChEBI" id="CHEBI:33019"/>
        <dbReference type="ChEBI" id="CHEBI:61560"/>
        <dbReference type="ChEBI" id="CHEBI:65317"/>
        <dbReference type="EC" id="3.6.1.9"/>
    </reaction>
</comment>
<comment type="cofactor">
    <cofactor evidence="1">
        <name>a divalent metal cation</name>
        <dbReference type="ChEBI" id="CHEBI:60240"/>
    </cofactor>
</comment>
<comment type="subcellular location">
    <subcellularLocation>
        <location evidence="1">Cytoplasm</location>
    </subcellularLocation>
</comment>
<comment type="similarity">
    <text evidence="1">Belongs to the Maf family.</text>
</comment>
<gene>
    <name type="ordered locus">Mflv_4776</name>
</gene>
<keyword id="KW-0963">Cytoplasm</keyword>
<keyword id="KW-0378">Hydrolase</keyword>
<keyword id="KW-0546">Nucleotide metabolism</keyword>
<protein>
    <recommendedName>
        <fullName evidence="1">Nucleoside triphosphate pyrophosphatase</fullName>
        <ecNumber evidence="1">3.6.1.9</ecNumber>
    </recommendedName>
    <alternativeName>
        <fullName evidence="1">Nucleotide pyrophosphatase</fullName>
        <shortName evidence="1">Nucleotide PPase</shortName>
    </alternativeName>
</protein>
<reference key="1">
    <citation type="submission" date="2007-04" db="EMBL/GenBank/DDBJ databases">
        <title>Complete sequence of chromosome of Mycobacterium gilvum PYR-GCK.</title>
        <authorList>
            <consortium name="US DOE Joint Genome Institute"/>
            <person name="Copeland A."/>
            <person name="Lucas S."/>
            <person name="Lapidus A."/>
            <person name="Barry K."/>
            <person name="Detter J.C."/>
            <person name="Glavina del Rio T."/>
            <person name="Hammon N."/>
            <person name="Israni S."/>
            <person name="Dalin E."/>
            <person name="Tice H."/>
            <person name="Pitluck S."/>
            <person name="Chain P."/>
            <person name="Malfatti S."/>
            <person name="Shin M."/>
            <person name="Vergez L."/>
            <person name="Schmutz J."/>
            <person name="Larimer F."/>
            <person name="Land M."/>
            <person name="Hauser L."/>
            <person name="Kyrpides N."/>
            <person name="Mikhailova N."/>
            <person name="Miller C."/>
            <person name="Richardson P."/>
        </authorList>
    </citation>
    <scope>NUCLEOTIDE SEQUENCE [LARGE SCALE GENOMIC DNA]</scope>
    <source>
        <strain>PYR-GCK</strain>
    </source>
</reference>